<evidence type="ECO:0000255" key="1">
    <source>
        <dbReference type="HAMAP-Rule" id="MF_00367"/>
    </source>
</evidence>
<evidence type="ECO:0000255" key="2">
    <source>
        <dbReference type="PROSITE-ProRule" id="PRU01050"/>
    </source>
</evidence>
<reference key="1">
    <citation type="submission" date="2008-04" db="EMBL/GenBank/DDBJ databases">
        <title>Complete sequence of Yersinia pseudotuberculosis PB1/+.</title>
        <authorList>
            <person name="Copeland A."/>
            <person name="Lucas S."/>
            <person name="Lapidus A."/>
            <person name="Glavina del Rio T."/>
            <person name="Dalin E."/>
            <person name="Tice H."/>
            <person name="Bruce D."/>
            <person name="Goodwin L."/>
            <person name="Pitluck S."/>
            <person name="Munk A.C."/>
            <person name="Brettin T."/>
            <person name="Detter J.C."/>
            <person name="Han C."/>
            <person name="Tapia R."/>
            <person name="Schmutz J."/>
            <person name="Larimer F."/>
            <person name="Land M."/>
            <person name="Hauser L."/>
            <person name="Challacombe J.F."/>
            <person name="Green L."/>
            <person name="Lindler L.E."/>
            <person name="Nikolich M.P."/>
            <person name="Richardson P."/>
        </authorList>
    </citation>
    <scope>NUCLEOTIDE SEQUENCE [LARGE SCALE GENOMIC DNA]</scope>
    <source>
        <strain>PB1/+</strain>
    </source>
</reference>
<gene>
    <name evidence="1" type="primary">era</name>
    <name type="ordered locus">YPTS_3000</name>
</gene>
<keyword id="KW-0997">Cell inner membrane</keyword>
<keyword id="KW-1003">Cell membrane</keyword>
<keyword id="KW-0963">Cytoplasm</keyword>
<keyword id="KW-0342">GTP-binding</keyword>
<keyword id="KW-0472">Membrane</keyword>
<keyword id="KW-0547">Nucleotide-binding</keyword>
<keyword id="KW-0690">Ribosome biogenesis</keyword>
<keyword id="KW-0694">RNA-binding</keyword>
<keyword id="KW-0699">rRNA-binding</keyword>
<name>ERA_YERPB</name>
<proteinExistence type="inferred from homology"/>
<feature type="chain" id="PRO_1000121371" description="GTPase Era">
    <location>
        <begin position="1"/>
        <end position="303"/>
    </location>
</feature>
<feature type="domain" description="Era-type G" evidence="2">
    <location>
        <begin position="8"/>
        <end position="176"/>
    </location>
</feature>
<feature type="domain" description="KH type-2" evidence="1">
    <location>
        <begin position="207"/>
        <end position="284"/>
    </location>
</feature>
<feature type="region of interest" description="G1" evidence="2">
    <location>
        <begin position="16"/>
        <end position="23"/>
    </location>
</feature>
<feature type="region of interest" description="G2" evidence="2">
    <location>
        <begin position="42"/>
        <end position="46"/>
    </location>
</feature>
<feature type="region of interest" description="G3" evidence="2">
    <location>
        <begin position="63"/>
        <end position="66"/>
    </location>
</feature>
<feature type="region of interest" description="G4" evidence="2">
    <location>
        <begin position="125"/>
        <end position="128"/>
    </location>
</feature>
<feature type="region of interest" description="G5" evidence="2">
    <location>
        <begin position="155"/>
        <end position="157"/>
    </location>
</feature>
<feature type="binding site" evidence="1">
    <location>
        <begin position="16"/>
        <end position="23"/>
    </location>
    <ligand>
        <name>GTP</name>
        <dbReference type="ChEBI" id="CHEBI:37565"/>
    </ligand>
</feature>
<feature type="binding site" evidence="1">
    <location>
        <begin position="63"/>
        <end position="67"/>
    </location>
    <ligand>
        <name>GTP</name>
        <dbReference type="ChEBI" id="CHEBI:37565"/>
    </ligand>
</feature>
<feature type="binding site" evidence="1">
    <location>
        <begin position="125"/>
        <end position="128"/>
    </location>
    <ligand>
        <name>GTP</name>
        <dbReference type="ChEBI" id="CHEBI:37565"/>
    </ligand>
</feature>
<comment type="function">
    <text evidence="1">An essential GTPase that binds both GDP and GTP, with rapid nucleotide exchange. Plays a role in 16S rRNA processing and 30S ribosomal subunit biogenesis and possibly also in cell cycle regulation and energy metabolism.</text>
</comment>
<comment type="subunit">
    <text evidence="1">Monomer.</text>
</comment>
<comment type="subcellular location">
    <subcellularLocation>
        <location>Cytoplasm</location>
    </subcellularLocation>
    <subcellularLocation>
        <location evidence="1">Cell inner membrane</location>
        <topology evidence="1">Peripheral membrane protein</topology>
    </subcellularLocation>
</comment>
<comment type="similarity">
    <text evidence="1 2">Belongs to the TRAFAC class TrmE-Era-EngA-EngB-Septin-like GTPase superfamily. Era GTPase family.</text>
</comment>
<organism>
    <name type="scientific">Yersinia pseudotuberculosis serotype IB (strain PB1/+)</name>
    <dbReference type="NCBI Taxonomy" id="502801"/>
    <lineage>
        <taxon>Bacteria</taxon>
        <taxon>Pseudomonadati</taxon>
        <taxon>Pseudomonadota</taxon>
        <taxon>Gammaproteobacteria</taxon>
        <taxon>Enterobacterales</taxon>
        <taxon>Yersiniaceae</taxon>
        <taxon>Yersinia</taxon>
    </lineage>
</organism>
<accession>B2KA46</accession>
<protein>
    <recommendedName>
        <fullName evidence="1">GTPase Era</fullName>
    </recommendedName>
</protein>
<dbReference type="EMBL" id="CP001048">
    <property type="protein sequence ID" value="ACC89957.1"/>
    <property type="molecule type" value="Genomic_DNA"/>
</dbReference>
<dbReference type="RefSeq" id="WP_002214829.1">
    <property type="nucleotide sequence ID" value="NZ_CP009780.1"/>
</dbReference>
<dbReference type="SMR" id="B2KA46"/>
<dbReference type="GeneID" id="96662248"/>
<dbReference type="KEGG" id="ypb:YPTS_3000"/>
<dbReference type="PATRIC" id="fig|502801.10.peg.2431"/>
<dbReference type="GO" id="GO:0005829">
    <property type="term" value="C:cytosol"/>
    <property type="evidence" value="ECO:0007669"/>
    <property type="project" value="TreeGrafter"/>
</dbReference>
<dbReference type="GO" id="GO:0005886">
    <property type="term" value="C:plasma membrane"/>
    <property type="evidence" value="ECO:0007669"/>
    <property type="project" value="UniProtKB-SubCell"/>
</dbReference>
<dbReference type="GO" id="GO:0005525">
    <property type="term" value="F:GTP binding"/>
    <property type="evidence" value="ECO:0007669"/>
    <property type="project" value="UniProtKB-UniRule"/>
</dbReference>
<dbReference type="GO" id="GO:0003924">
    <property type="term" value="F:GTPase activity"/>
    <property type="evidence" value="ECO:0007669"/>
    <property type="project" value="UniProtKB-UniRule"/>
</dbReference>
<dbReference type="GO" id="GO:0043024">
    <property type="term" value="F:ribosomal small subunit binding"/>
    <property type="evidence" value="ECO:0007669"/>
    <property type="project" value="TreeGrafter"/>
</dbReference>
<dbReference type="GO" id="GO:0070181">
    <property type="term" value="F:small ribosomal subunit rRNA binding"/>
    <property type="evidence" value="ECO:0007669"/>
    <property type="project" value="UniProtKB-UniRule"/>
</dbReference>
<dbReference type="GO" id="GO:0000028">
    <property type="term" value="P:ribosomal small subunit assembly"/>
    <property type="evidence" value="ECO:0007669"/>
    <property type="project" value="TreeGrafter"/>
</dbReference>
<dbReference type="CDD" id="cd04163">
    <property type="entry name" value="Era"/>
    <property type="match status" value="1"/>
</dbReference>
<dbReference type="CDD" id="cd22534">
    <property type="entry name" value="KH-II_Era"/>
    <property type="match status" value="1"/>
</dbReference>
<dbReference type="FunFam" id="3.30.300.20:FF:000003">
    <property type="entry name" value="GTPase Era"/>
    <property type="match status" value="1"/>
</dbReference>
<dbReference type="FunFam" id="3.40.50.300:FF:000094">
    <property type="entry name" value="GTPase Era"/>
    <property type="match status" value="1"/>
</dbReference>
<dbReference type="Gene3D" id="3.30.300.20">
    <property type="match status" value="1"/>
</dbReference>
<dbReference type="Gene3D" id="3.40.50.300">
    <property type="entry name" value="P-loop containing nucleotide triphosphate hydrolases"/>
    <property type="match status" value="1"/>
</dbReference>
<dbReference type="HAMAP" id="MF_00367">
    <property type="entry name" value="GTPase_Era"/>
    <property type="match status" value="1"/>
</dbReference>
<dbReference type="InterPro" id="IPR030388">
    <property type="entry name" value="G_ERA_dom"/>
</dbReference>
<dbReference type="InterPro" id="IPR006073">
    <property type="entry name" value="GTP-bd"/>
</dbReference>
<dbReference type="InterPro" id="IPR005662">
    <property type="entry name" value="GTPase_Era-like"/>
</dbReference>
<dbReference type="InterPro" id="IPR015946">
    <property type="entry name" value="KH_dom-like_a/b"/>
</dbReference>
<dbReference type="InterPro" id="IPR004044">
    <property type="entry name" value="KH_dom_type_2"/>
</dbReference>
<dbReference type="InterPro" id="IPR009019">
    <property type="entry name" value="KH_sf_prok-type"/>
</dbReference>
<dbReference type="InterPro" id="IPR027417">
    <property type="entry name" value="P-loop_NTPase"/>
</dbReference>
<dbReference type="InterPro" id="IPR005225">
    <property type="entry name" value="Small_GTP-bd"/>
</dbReference>
<dbReference type="NCBIfam" id="TIGR00436">
    <property type="entry name" value="era"/>
    <property type="match status" value="1"/>
</dbReference>
<dbReference type="NCBIfam" id="NF000908">
    <property type="entry name" value="PRK00089.1"/>
    <property type="match status" value="1"/>
</dbReference>
<dbReference type="NCBIfam" id="TIGR00231">
    <property type="entry name" value="small_GTP"/>
    <property type="match status" value="1"/>
</dbReference>
<dbReference type="PANTHER" id="PTHR42698">
    <property type="entry name" value="GTPASE ERA"/>
    <property type="match status" value="1"/>
</dbReference>
<dbReference type="PANTHER" id="PTHR42698:SF1">
    <property type="entry name" value="GTPASE ERA, MITOCHONDRIAL"/>
    <property type="match status" value="1"/>
</dbReference>
<dbReference type="Pfam" id="PF07650">
    <property type="entry name" value="KH_2"/>
    <property type="match status" value="1"/>
</dbReference>
<dbReference type="Pfam" id="PF01926">
    <property type="entry name" value="MMR_HSR1"/>
    <property type="match status" value="1"/>
</dbReference>
<dbReference type="SUPFAM" id="SSF52540">
    <property type="entry name" value="P-loop containing nucleoside triphosphate hydrolases"/>
    <property type="match status" value="1"/>
</dbReference>
<dbReference type="SUPFAM" id="SSF54814">
    <property type="entry name" value="Prokaryotic type KH domain (KH-domain type II)"/>
    <property type="match status" value="1"/>
</dbReference>
<dbReference type="PROSITE" id="PS51713">
    <property type="entry name" value="G_ERA"/>
    <property type="match status" value="1"/>
</dbReference>
<dbReference type="PROSITE" id="PS50823">
    <property type="entry name" value="KH_TYPE_2"/>
    <property type="match status" value="1"/>
</dbReference>
<sequence>MSEVEKTYCGFIAIVGRPNVGKSTLLNELLGQKISITSRKPQTTRHRIMGIHTEGPYQAIYVDTPGLHIEEKRAINRLMNRAASSSLGDVELVIFVVEGTHWTADDEMVVNKLRSLQCPVLLAINKVDNVTDKTKLLPHMQFLSQQMNFLDVVPISAEKGMNVDTIASIVRKHMPEAEHHFPEDYITDRSQRFMASEIIREKLMRFLGEELPYSVTVEIEQFVPNERGGYNIHGLILVEREGQKKMVIGNKGSKIKVIGTEARQDMERMFEAKVHLELWVKVKSGWADDERALRSLGYTDDLK</sequence>